<keyword id="KW-0687">Ribonucleoprotein</keyword>
<keyword id="KW-0689">Ribosomal protein</keyword>
<dbReference type="EMBL" id="CP000847">
    <property type="protein sequence ID" value="ABV75213.1"/>
    <property type="molecule type" value="Genomic_DNA"/>
</dbReference>
<dbReference type="RefSeq" id="WP_012149843.1">
    <property type="nucleotide sequence ID" value="NC_009881.1"/>
</dbReference>
<dbReference type="SMR" id="A8GP88"/>
<dbReference type="STRING" id="293614.A1C_04765"/>
<dbReference type="KEGG" id="rak:A1C_04765"/>
<dbReference type="eggNOG" id="COG0291">
    <property type="taxonomic scope" value="Bacteria"/>
</dbReference>
<dbReference type="HOGENOM" id="CLU_169643_2_1_5"/>
<dbReference type="Proteomes" id="UP000006830">
    <property type="component" value="Chromosome"/>
</dbReference>
<dbReference type="GO" id="GO:0022625">
    <property type="term" value="C:cytosolic large ribosomal subunit"/>
    <property type="evidence" value="ECO:0007669"/>
    <property type="project" value="TreeGrafter"/>
</dbReference>
<dbReference type="GO" id="GO:0003735">
    <property type="term" value="F:structural constituent of ribosome"/>
    <property type="evidence" value="ECO:0007669"/>
    <property type="project" value="InterPro"/>
</dbReference>
<dbReference type="GO" id="GO:0006412">
    <property type="term" value="P:translation"/>
    <property type="evidence" value="ECO:0007669"/>
    <property type="project" value="UniProtKB-UniRule"/>
</dbReference>
<dbReference type="FunFam" id="4.10.410.60:FF:000001">
    <property type="entry name" value="50S ribosomal protein L35"/>
    <property type="match status" value="1"/>
</dbReference>
<dbReference type="Gene3D" id="4.10.410.60">
    <property type="match status" value="1"/>
</dbReference>
<dbReference type="HAMAP" id="MF_00514">
    <property type="entry name" value="Ribosomal_bL35"/>
    <property type="match status" value="1"/>
</dbReference>
<dbReference type="InterPro" id="IPR001706">
    <property type="entry name" value="Ribosomal_bL35"/>
</dbReference>
<dbReference type="InterPro" id="IPR021137">
    <property type="entry name" value="Ribosomal_bL35-like"/>
</dbReference>
<dbReference type="InterPro" id="IPR018265">
    <property type="entry name" value="Ribosomal_bL35_CS"/>
</dbReference>
<dbReference type="InterPro" id="IPR037229">
    <property type="entry name" value="Ribosomal_bL35_sf"/>
</dbReference>
<dbReference type="NCBIfam" id="TIGR00001">
    <property type="entry name" value="rpmI_bact"/>
    <property type="match status" value="1"/>
</dbReference>
<dbReference type="PANTHER" id="PTHR33343">
    <property type="entry name" value="54S RIBOSOMAL PROTEIN BL35M"/>
    <property type="match status" value="1"/>
</dbReference>
<dbReference type="PANTHER" id="PTHR33343:SF1">
    <property type="entry name" value="LARGE RIBOSOMAL SUBUNIT PROTEIN BL35M"/>
    <property type="match status" value="1"/>
</dbReference>
<dbReference type="Pfam" id="PF01632">
    <property type="entry name" value="Ribosomal_L35p"/>
    <property type="match status" value="1"/>
</dbReference>
<dbReference type="PRINTS" id="PR00064">
    <property type="entry name" value="RIBOSOMALL35"/>
</dbReference>
<dbReference type="SUPFAM" id="SSF143034">
    <property type="entry name" value="L35p-like"/>
    <property type="match status" value="1"/>
</dbReference>
<dbReference type="PROSITE" id="PS00936">
    <property type="entry name" value="RIBOSOMAL_L35"/>
    <property type="match status" value="1"/>
</dbReference>
<accession>A8GP88</accession>
<proteinExistence type="inferred from homology"/>
<organism>
    <name type="scientific">Rickettsia akari (strain Hartford)</name>
    <dbReference type="NCBI Taxonomy" id="293614"/>
    <lineage>
        <taxon>Bacteria</taxon>
        <taxon>Pseudomonadati</taxon>
        <taxon>Pseudomonadota</taxon>
        <taxon>Alphaproteobacteria</taxon>
        <taxon>Rickettsiales</taxon>
        <taxon>Rickettsiaceae</taxon>
        <taxon>Rickettsieae</taxon>
        <taxon>Rickettsia</taxon>
        <taxon>spotted fever group</taxon>
    </lineage>
</organism>
<name>RL35_RICAH</name>
<protein>
    <recommendedName>
        <fullName evidence="1">Large ribosomal subunit protein bL35</fullName>
    </recommendedName>
    <alternativeName>
        <fullName evidence="2">50S ribosomal protein L35</fullName>
    </alternativeName>
</protein>
<reference key="1">
    <citation type="submission" date="2007-09" db="EMBL/GenBank/DDBJ databases">
        <title>Complete genome sequence of Rickettsia akari.</title>
        <authorList>
            <person name="Madan A."/>
            <person name="Fahey J."/>
            <person name="Helton E."/>
            <person name="Ketteman M."/>
            <person name="Madan A."/>
            <person name="Rodrigues S."/>
            <person name="Sanchez A."/>
            <person name="Whiting M."/>
            <person name="Dasch G."/>
            <person name="Eremeeva M."/>
        </authorList>
    </citation>
    <scope>NUCLEOTIDE SEQUENCE [LARGE SCALE GENOMIC DNA]</scope>
    <source>
        <strain>Hartford</strain>
    </source>
</reference>
<sequence length="68" mass="7811">MPKLKTKSAVKKRFKLTATGKVIASQAGKKHFMRRRTKAQIRNLRGTTILCPKDGYNIKKYFLPYGIN</sequence>
<evidence type="ECO:0000255" key="1">
    <source>
        <dbReference type="HAMAP-Rule" id="MF_00514"/>
    </source>
</evidence>
<evidence type="ECO:0000305" key="2"/>
<gene>
    <name evidence="1" type="primary">rpmI</name>
    <name type="ordered locus">A1C_04765</name>
</gene>
<feature type="chain" id="PRO_1000050755" description="Large ribosomal subunit protein bL35">
    <location>
        <begin position="1"/>
        <end position="68"/>
    </location>
</feature>
<comment type="similarity">
    <text evidence="1">Belongs to the bacterial ribosomal protein bL35 family.</text>
</comment>